<keyword id="KW-0274">FAD</keyword>
<keyword id="KW-0285">Flavoprotein</keyword>
<keyword id="KW-0521">NADP</keyword>
<keyword id="KW-0560">Oxidoreductase</keyword>
<keyword id="KW-1185">Reference proteome</keyword>
<dbReference type="EC" id="1.18.1.2" evidence="1"/>
<dbReference type="EMBL" id="AE016879">
    <property type="protein sequence ID" value="AAP24385.1"/>
    <property type="molecule type" value="Genomic_DNA"/>
</dbReference>
<dbReference type="EMBL" id="AE017334">
    <property type="protein sequence ID" value="AAT29443.1"/>
    <property type="molecule type" value="Genomic_DNA"/>
</dbReference>
<dbReference type="EMBL" id="AE017225">
    <property type="protein sequence ID" value="AAT52668.1"/>
    <property type="molecule type" value="Genomic_DNA"/>
</dbReference>
<dbReference type="RefSeq" id="NP_842899.1">
    <property type="nucleotide sequence ID" value="NC_003997.3"/>
</dbReference>
<dbReference type="RefSeq" id="WP_001078275.1">
    <property type="nucleotide sequence ID" value="NZ_WXXJ01000007.1"/>
</dbReference>
<dbReference type="RefSeq" id="YP_026617.1">
    <property type="nucleotide sequence ID" value="NC_005945.1"/>
</dbReference>
<dbReference type="SMR" id="Q81ZB7"/>
<dbReference type="STRING" id="261594.GBAA_0352"/>
<dbReference type="KEGG" id="ban:BA_0352"/>
<dbReference type="KEGG" id="bar:GBAA_0352"/>
<dbReference type="KEGG" id="bat:BAS0337"/>
<dbReference type="PATRIC" id="fig|198094.11.peg.343"/>
<dbReference type="eggNOG" id="COG0492">
    <property type="taxonomic scope" value="Bacteria"/>
</dbReference>
<dbReference type="HOGENOM" id="CLU_031864_5_5_9"/>
<dbReference type="OMA" id="LEQCAPF"/>
<dbReference type="OrthoDB" id="9806179at2"/>
<dbReference type="Proteomes" id="UP000000427">
    <property type="component" value="Chromosome"/>
</dbReference>
<dbReference type="Proteomes" id="UP000000594">
    <property type="component" value="Chromosome"/>
</dbReference>
<dbReference type="GO" id="GO:0004324">
    <property type="term" value="F:ferredoxin-NADP+ reductase activity"/>
    <property type="evidence" value="ECO:0007669"/>
    <property type="project" value="UniProtKB-UniRule"/>
</dbReference>
<dbReference type="GO" id="GO:0050660">
    <property type="term" value="F:flavin adenine dinucleotide binding"/>
    <property type="evidence" value="ECO:0007669"/>
    <property type="project" value="UniProtKB-UniRule"/>
</dbReference>
<dbReference type="GO" id="GO:0050661">
    <property type="term" value="F:NADP binding"/>
    <property type="evidence" value="ECO:0007669"/>
    <property type="project" value="UniProtKB-UniRule"/>
</dbReference>
<dbReference type="Gene3D" id="3.50.50.60">
    <property type="entry name" value="FAD/NAD(P)-binding domain"/>
    <property type="match status" value="2"/>
</dbReference>
<dbReference type="HAMAP" id="MF_01685">
    <property type="entry name" value="FENR2"/>
    <property type="match status" value="1"/>
</dbReference>
<dbReference type="InterPro" id="IPR036188">
    <property type="entry name" value="FAD/NAD-bd_sf"/>
</dbReference>
<dbReference type="InterPro" id="IPR023753">
    <property type="entry name" value="FAD/NAD-binding_dom"/>
</dbReference>
<dbReference type="InterPro" id="IPR022890">
    <property type="entry name" value="Fd--NADP_Rdtase_type_2"/>
</dbReference>
<dbReference type="InterPro" id="IPR050097">
    <property type="entry name" value="Ferredoxin-NADP_redctase_2"/>
</dbReference>
<dbReference type="PANTHER" id="PTHR48105">
    <property type="entry name" value="THIOREDOXIN REDUCTASE 1-RELATED-RELATED"/>
    <property type="match status" value="1"/>
</dbReference>
<dbReference type="Pfam" id="PF07992">
    <property type="entry name" value="Pyr_redox_2"/>
    <property type="match status" value="1"/>
</dbReference>
<dbReference type="PRINTS" id="PR00368">
    <property type="entry name" value="FADPNR"/>
</dbReference>
<dbReference type="PRINTS" id="PR00469">
    <property type="entry name" value="PNDRDTASEII"/>
</dbReference>
<dbReference type="SUPFAM" id="SSF51905">
    <property type="entry name" value="FAD/NAD(P)-binding domain"/>
    <property type="match status" value="1"/>
</dbReference>
<reference key="1">
    <citation type="journal article" date="2003" name="Nature">
        <title>The genome sequence of Bacillus anthracis Ames and comparison to closely related bacteria.</title>
        <authorList>
            <person name="Read T.D."/>
            <person name="Peterson S.N."/>
            <person name="Tourasse N.J."/>
            <person name="Baillie L.W."/>
            <person name="Paulsen I.T."/>
            <person name="Nelson K.E."/>
            <person name="Tettelin H."/>
            <person name="Fouts D.E."/>
            <person name="Eisen J.A."/>
            <person name="Gill S.R."/>
            <person name="Holtzapple E.K."/>
            <person name="Okstad O.A."/>
            <person name="Helgason E."/>
            <person name="Rilstone J."/>
            <person name="Wu M."/>
            <person name="Kolonay J.F."/>
            <person name="Beanan M.J."/>
            <person name="Dodson R.J."/>
            <person name="Brinkac L.M."/>
            <person name="Gwinn M.L."/>
            <person name="DeBoy R.T."/>
            <person name="Madpu R."/>
            <person name="Daugherty S.C."/>
            <person name="Durkin A.S."/>
            <person name="Haft D.H."/>
            <person name="Nelson W.C."/>
            <person name="Peterson J.D."/>
            <person name="Pop M."/>
            <person name="Khouri H.M."/>
            <person name="Radune D."/>
            <person name="Benton J.L."/>
            <person name="Mahamoud Y."/>
            <person name="Jiang L."/>
            <person name="Hance I.R."/>
            <person name="Weidman J.F."/>
            <person name="Berry K.J."/>
            <person name="Plaut R.D."/>
            <person name="Wolf A.M."/>
            <person name="Watkins K.L."/>
            <person name="Nierman W.C."/>
            <person name="Hazen A."/>
            <person name="Cline R.T."/>
            <person name="Redmond C."/>
            <person name="Thwaite J.E."/>
            <person name="White O."/>
            <person name="Salzberg S.L."/>
            <person name="Thomason B."/>
            <person name="Friedlander A.M."/>
            <person name="Koehler T.M."/>
            <person name="Hanna P.C."/>
            <person name="Kolstoe A.-B."/>
            <person name="Fraser C.M."/>
        </authorList>
    </citation>
    <scope>NUCLEOTIDE SEQUENCE [LARGE SCALE GENOMIC DNA]</scope>
    <source>
        <strain>Ames / isolate Porton</strain>
    </source>
</reference>
<reference key="2">
    <citation type="submission" date="2004-01" db="EMBL/GenBank/DDBJ databases">
        <title>Complete genome sequence of Bacillus anthracis Sterne.</title>
        <authorList>
            <person name="Brettin T.S."/>
            <person name="Bruce D."/>
            <person name="Challacombe J.F."/>
            <person name="Gilna P."/>
            <person name="Han C."/>
            <person name="Hill K."/>
            <person name="Hitchcock P."/>
            <person name="Jackson P."/>
            <person name="Keim P."/>
            <person name="Longmire J."/>
            <person name="Lucas S."/>
            <person name="Okinaka R."/>
            <person name="Richardson P."/>
            <person name="Rubin E."/>
            <person name="Tice H."/>
        </authorList>
    </citation>
    <scope>NUCLEOTIDE SEQUENCE [LARGE SCALE GENOMIC DNA]</scope>
    <source>
        <strain>Sterne</strain>
    </source>
</reference>
<reference key="3">
    <citation type="journal article" date="2009" name="J. Bacteriol.">
        <title>The complete genome sequence of Bacillus anthracis Ames 'Ancestor'.</title>
        <authorList>
            <person name="Ravel J."/>
            <person name="Jiang L."/>
            <person name="Stanley S.T."/>
            <person name="Wilson M.R."/>
            <person name="Decker R.S."/>
            <person name="Read T.D."/>
            <person name="Worsham P."/>
            <person name="Keim P.S."/>
            <person name="Salzberg S.L."/>
            <person name="Fraser-Liggett C.M."/>
            <person name="Rasko D.A."/>
        </authorList>
    </citation>
    <scope>NUCLEOTIDE SEQUENCE [LARGE SCALE GENOMIC DNA]</scope>
    <source>
        <strain>Ames ancestor</strain>
    </source>
</reference>
<protein>
    <recommendedName>
        <fullName evidence="1">Ferredoxin--NADP reductase 1</fullName>
        <shortName evidence="1">FNR 1</shortName>
        <shortName evidence="1">Fd-NADP(+) reductase 1</shortName>
        <ecNumber evidence="1">1.18.1.2</ecNumber>
    </recommendedName>
</protein>
<sequence>MNREELFDVTVIGGGPAGLYSAFYSGLREMKTKIIEFQPQLGGKIHVYPEKMIWDIGGLLPVTGEKLIEQLVQQGLTFQPEVVLNTKIESIIRNKDGIFTLKTSTGEEHFSKTVIVATGSGILNPQKLSIEGAERFEVSNLNYTVKSLKRFKNKTVIISGGGNSAIDWANELEPIAKKVYLTYRKEELSGHEAQVKQLMNSSAECFFNTSITTLIAGDNHEAIEYVELTNHETGEVSQLAIDEVIINHGYERDITLLENSELDVAIIDNYYIAGNANSESSVDGLYAAGDILKHEGKLHLIAGAFQDAGNAVNKAKQFIQPDASEYGMVSSHNEVFKKRNRELIKQMMK</sequence>
<name>FENR1_BACAN</name>
<evidence type="ECO:0000255" key="1">
    <source>
        <dbReference type="HAMAP-Rule" id="MF_01685"/>
    </source>
</evidence>
<feature type="chain" id="PRO_0000364786" description="Ferredoxin--NADP reductase 1">
    <location>
        <begin position="1"/>
        <end position="349"/>
    </location>
</feature>
<feature type="binding site" evidence="1">
    <location>
        <position position="36"/>
    </location>
    <ligand>
        <name>FAD</name>
        <dbReference type="ChEBI" id="CHEBI:57692"/>
    </ligand>
</feature>
<feature type="binding site" evidence="1">
    <location>
        <position position="44"/>
    </location>
    <ligand>
        <name>FAD</name>
        <dbReference type="ChEBI" id="CHEBI:57692"/>
    </ligand>
</feature>
<feature type="binding site" evidence="1">
    <location>
        <position position="48"/>
    </location>
    <ligand>
        <name>FAD</name>
        <dbReference type="ChEBI" id="CHEBI:57692"/>
    </ligand>
</feature>
<feature type="binding site" evidence="1">
    <location>
        <position position="88"/>
    </location>
    <ligand>
        <name>FAD</name>
        <dbReference type="ChEBI" id="CHEBI:57692"/>
    </ligand>
</feature>
<feature type="binding site" evidence="1">
    <location>
        <position position="123"/>
    </location>
    <ligand>
        <name>FAD</name>
        <dbReference type="ChEBI" id="CHEBI:57692"/>
    </ligand>
</feature>
<feature type="binding site" evidence="1">
    <location>
        <position position="290"/>
    </location>
    <ligand>
        <name>FAD</name>
        <dbReference type="ChEBI" id="CHEBI:57692"/>
    </ligand>
</feature>
<feature type="binding site" evidence="1">
    <location>
        <position position="331"/>
    </location>
    <ligand>
        <name>FAD</name>
        <dbReference type="ChEBI" id="CHEBI:57692"/>
    </ligand>
</feature>
<comment type="catalytic activity">
    <reaction evidence="1">
        <text>2 reduced [2Fe-2S]-[ferredoxin] + NADP(+) + H(+) = 2 oxidized [2Fe-2S]-[ferredoxin] + NADPH</text>
        <dbReference type="Rhea" id="RHEA:20125"/>
        <dbReference type="Rhea" id="RHEA-COMP:10000"/>
        <dbReference type="Rhea" id="RHEA-COMP:10001"/>
        <dbReference type="ChEBI" id="CHEBI:15378"/>
        <dbReference type="ChEBI" id="CHEBI:33737"/>
        <dbReference type="ChEBI" id="CHEBI:33738"/>
        <dbReference type="ChEBI" id="CHEBI:57783"/>
        <dbReference type="ChEBI" id="CHEBI:58349"/>
        <dbReference type="EC" id="1.18.1.2"/>
    </reaction>
</comment>
<comment type="cofactor">
    <cofactor evidence="1">
        <name>FAD</name>
        <dbReference type="ChEBI" id="CHEBI:57692"/>
    </cofactor>
    <text evidence="1">Binds 1 FAD per subunit.</text>
</comment>
<comment type="subunit">
    <text evidence="1">Homodimer.</text>
</comment>
<comment type="similarity">
    <text evidence="1">Belongs to the ferredoxin--NADP reductase type 2 family.</text>
</comment>
<proteinExistence type="inferred from homology"/>
<gene>
    <name type="ordered locus">BA_0352</name>
    <name type="ordered locus">GBAA_0352</name>
    <name type="ordered locus">BAS0337</name>
</gene>
<accession>Q81ZB7</accession>
<accession>Q6I463</accession>
<accession>Q6KXW9</accession>
<organism>
    <name type="scientific">Bacillus anthracis</name>
    <dbReference type="NCBI Taxonomy" id="1392"/>
    <lineage>
        <taxon>Bacteria</taxon>
        <taxon>Bacillati</taxon>
        <taxon>Bacillota</taxon>
        <taxon>Bacilli</taxon>
        <taxon>Bacillales</taxon>
        <taxon>Bacillaceae</taxon>
        <taxon>Bacillus</taxon>
        <taxon>Bacillus cereus group</taxon>
    </lineage>
</organism>